<name>NU6C_AETCO</name>
<keyword id="KW-0150">Chloroplast</keyword>
<keyword id="KW-0472">Membrane</keyword>
<keyword id="KW-0520">NAD</keyword>
<keyword id="KW-0521">NADP</keyword>
<keyword id="KW-0934">Plastid</keyword>
<keyword id="KW-0618">Plastoquinone</keyword>
<keyword id="KW-0874">Quinone</keyword>
<keyword id="KW-0793">Thylakoid</keyword>
<keyword id="KW-1278">Translocase</keyword>
<keyword id="KW-0812">Transmembrane</keyword>
<keyword id="KW-1133">Transmembrane helix</keyword>
<keyword id="KW-0813">Transport</keyword>
<evidence type="ECO:0000250" key="1"/>
<evidence type="ECO:0000255" key="2"/>
<evidence type="ECO:0000305" key="3"/>
<reference key="1">
    <citation type="submission" date="2007-03" db="EMBL/GenBank/DDBJ databases">
        <title>Sequencing analysis of Aethionema coridifolium chloroplast DNA.</title>
        <authorList>
            <person name="Hosouchi T."/>
            <person name="Tsuruoka H."/>
            <person name="Kotani H."/>
        </authorList>
    </citation>
    <scope>NUCLEOTIDE SEQUENCE [LARGE SCALE GENOMIC DNA]</scope>
</reference>
<feature type="chain" id="PRO_0000360223" description="NAD(P)H-quinone oxidoreductase subunit 6, chloroplastic">
    <location>
        <begin position="1"/>
        <end position="176"/>
    </location>
</feature>
<feature type="transmembrane region" description="Helical" evidence="2">
    <location>
        <begin position="10"/>
        <end position="30"/>
    </location>
</feature>
<feature type="transmembrane region" description="Helical" evidence="2">
    <location>
        <begin position="32"/>
        <end position="52"/>
    </location>
</feature>
<feature type="transmembrane region" description="Helical" evidence="2">
    <location>
        <begin position="61"/>
        <end position="81"/>
    </location>
</feature>
<feature type="transmembrane region" description="Helical" evidence="2">
    <location>
        <begin position="95"/>
        <end position="115"/>
    </location>
</feature>
<feature type="transmembrane region" description="Helical" evidence="2">
    <location>
        <begin position="152"/>
        <end position="172"/>
    </location>
</feature>
<gene>
    <name type="primary">ndhG</name>
</gene>
<proteinExistence type="inferred from homology"/>
<sequence>MDLPGPIHDFLLVFLGSGLLFGSLGVVLFPNPIFSAFSLGFVLVCISLLYILSNSHFVAAAQLLIYVGAITVLIIFAVMFMNDSEYSTDLNRWTVGDGITSVICTTILFSLISTILDTSWYGVIWTTRLNQILEQDLISNSQQIGIHLSTDFFLPFELISIILLVALIGAISVARQ</sequence>
<geneLocation type="chloroplast"/>
<accession>A4QJG9</accession>
<dbReference type="EC" id="7.1.1.-"/>
<dbReference type="EMBL" id="AP009366">
    <property type="protein sequence ID" value="BAF49824.1"/>
    <property type="molecule type" value="Genomic_DNA"/>
</dbReference>
<dbReference type="RefSeq" id="YP_001122999.1">
    <property type="nucleotide sequence ID" value="NC_009265.1"/>
</dbReference>
<dbReference type="SMR" id="A4QJG9"/>
<dbReference type="GeneID" id="4968627"/>
<dbReference type="GO" id="GO:0009535">
    <property type="term" value="C:chloroplast thylakoid membrane"/>
    <property type="evidence" value="ECO:0007669"/>
    <property type="project" value="UniProtKB-SubCell"/>
</dbReference>
<dbReference type="GO" id="GO:0008137">
    <property type="term" value="F:NADH dehydrogenase (ubiquinone) activity"/>
    <property type="evidence" value="ECO:0007669"/>
    <property type="project" value="InterPro"/>
</dbReference>
<dbReference type="GO" id="GO:0048038">
    <property type="term" value="F:quinone binding"/>
    <property type="evidence" value="ECO:0007669"/>
    <property type="project" value="UniProtKB-KW"/>
</dbReference>
<dbReference type="FunFam" id="1.20.120.1200:FF:000002">
    <property type="entry name" value="NAD(P)H-quinone oxidoreductase subunit 6, chloroplastic"/>
    <property type="match status" value="1"/>
</dbReference>
<dbReference type="Gene3D" id="1.20.120.1200">
    <property type="entry name" value="NADH-ubiquinone/plastoquinone oxidoreductase chain 6, subunit NuoJ"/>
    <property type="match status" value="1"/>
</dbReference>
<dbReference type="InterPro" id="IPR050290">
    <property type="entry name" value="NAD(P)H-Q_Oxidoreduct_6"/>
</dbReference>
<dbReference type="InterPro" id="IPR001457">
    <property type="entry name" value="NADH_UbQ/plastoQ_OxRdtase_su6"/>
</dbReference>
<dbReference type="InterPro" id="IPR042106">
    <property type="entry name" value="Nuo/plastoQ_OxRdtase_6_NuoJ"/>
</dbReference>
<dbReference type="PANTHER" id="PTHR48479">
    <property type="entry name" value="NAD(P)H-QUINONE OXIDOREDUCTASE SUBUNIT 6, CHLOROPLASTIC"/>
    <property type="match status" value="1"/>
</dbReference>
<dbReference type="PANTHER" id="PTHR48479:SF1">
    <property type="entry name" value="NAD(P)H-QUINONE OXIDOREDUCTASE SUBUNIT 6, CHLOROPLASTIC"/>
    <property type="match status" value="1"/>
</dbReference>
<dbReference type="Pfam" id="PF00499">
    <property type="entry name" value="Oxidored_q3"/>
    <property type="match status" value="1"/>
</dbReference>
<protein>
    <recommendedName>
        <fullName>NAD(P)H-quinone oxidoreductase subunit 6, chloroplastic</fullName>
        <ecNumber>7.1.1.-</ecNumber>
    </recommendedName>
    <alternativeName>
        <fullName>NAD(P)H dehydrogenase subunit 6</fullName>
    </alternativeName>
    <alternativeName>
        <fullName>NADH-plastoquinone oxidoreductase subunit 6</fullName>
    </alternativeName>
</protein>
<organism>
    <name type="scientific">Aethionema cordifolium</name>
    <name type="common">Lebanon stonecress</name>
    <dbReference type="NCBI Taxonomy" id="434059"/>
    <lineage>
        <taxon>Eukaryota</taxon>
        <taxon>Viridiplantae</taxon>
        <taxon>Streptophyta</taxon>
        <taxon>Embryophyta</taxon>
        <taxon>Tracheophyta</taxon>
        <taxon>Spermatophyta</taxon>
        <taxon>Magnoliopsida</taxon>
        <taxon>eudicotyledons</taxon>
        <taxon>Gunneridae</taxon>
        <taxon>Pentapetalae</taxon>
        <taxon>rosids</taxon>
        <taxon>malvids</taxon>
        <taxon>Brassicales</taxon>
        <taxon>Brassicaceae</taxon>
        <taxon>Aethionemeae</taxon>
        <taxon>Aethionema</taxon>
    </lineage>
</organism>
<comment type="function">
    <text evidence="1">NDH shuttles electrons from NAD(P)H:plastoquinone, via FMN and iron-sulfur (Fe-S) centers, to quinones in the photosynthetic chain and possibly in a chloroplast respiratory chain. The immediate electron acceptor for the enzyme in this species is believed to be plastoquinone. Couples the redox reaction to proton translocation, and thus conserves the redox energy in a proton gradient (By similarity).</text>
</comment>
<comment type="catalytic activity">
    <reaction>
        <text>a plastoquinone + NADH + (n+1) H(+)(in) = a plastoquinol + NAD(+) + n H(+)(out)</text>
        <dbReference type="Rhea" id="RHEA:42608"/>
        <dbReference type="Rhea" id="RHEA-COMP:9561"/>
        <dbReference type="Rhea" id="RHEA-COMP:9562"/>
        <dbReference type="ChEBI" id="CHEBI:15378"/>
        <dbReference type="ChEBI" id="CHEBI:17757"/>
        <dbReference type="ChEBI" id="CHEBI:57540"/>
        <dbReference type="ChEBI" id="CHEBI:57945"/>
        <dbReference type="ChEBI" id="CHEBI:62192"/>
    </reaction>
</comment>
<comment type="catalytic activity">
    <reaction>
        <text>a plastoquinone + NADPH + (n+1) H(+)(in) = a plastoquinol + NADP(+) + n H(+)(out)</text>
        <dbReference type="Rhea" id="RHEA:42612"/>
        <dbReference type="Rhea" id="RHEA-COMP:9561"/>
        <dbReference type="Rhea" id="RHEA-COMP:9562"/>
        <dbReference type="ChEBI" id="CHEBI:15378"/>
        <dbReference type="ChEBI" id="CHEBI:17757"/>
        <dbReference type="ChEBI" id="CHEBI:57783"/>
        <dbReference type="ChEBI" id="CHEBI:58349"/>
        <dbReference type="ChEBI" id="CHEBI:62192"/>
    </reaction>
</comment>
<comment type="subunit">
    <text evidence="1">NDH is composed of at least 16 different subunits, 5 of which are encoded in the nucleus.</text>
</comment>
<comment type="subcellular location">
    <subcellularLocation>
        <location evidence="1">Plastid</location>
        <location evidence="1">Chloroplast thylakoid membrane</location>
        <topology evidence="1">Multi-pass membrane protein</topology>
    </subcellularLocation>
</comment>
<comment type="similarity">
    <text evidence="3">Belongs to the complex I subunit 6 family.</text>
</comment>